<feature type="initiator methionine" description="Removed" evidence="1">
    <location>
        <position position="1"/>
    </location>
</feature>
<feature type="chain" id="PRO_0000198258" description="Calmodulin">
    <location>
        <begin position="2"/>
        <end position="149"/>
    </location>
</feature>
<feature type="domain" description="EF-hand 1" evidence="2">
    <location>
        <begin position="8"/>
        <end position="43"/>
    </location>
</feature>
<feature type="domain" description="EF-hand 2" evidence="2">
    <location>
        <begin position="44"/>
        <end position="79"/>
    </location>
</feature>
<feature type="domain" description="EF-hand 3" evidence="2">
    <location>
        <begin position="81"/>
        <end position="116"/>
    </location>
</feature>
<feature type="domain" description="EF-hand 4" evidence="2">
    <location>
        <begin position="117"/>
        <end position="149"/>
    </location>
</feature>
<feature type="binding site" evidence="2">
    <location>
        <position position="21"/>
    </location>
    <ligand>
        <name>Ca(2+)</name>
        <dbReference type="ChEBI" id="CHEBI:29108"/>
        <label>1</label>
    </ligand>
</feature>
<feature type="binding site" evidence="2">
    <location>
        <position position="23"/>
    </location>
    <ligand>
        <name>Ca(2+)</name>
        <dbReference type="ChEBI" id="CHEBI:29108"/>
        <label>1</label>
    </ligand>
</feature>
<feature type="binding site" evidence="2">
    <location>
        <position position="25"/>
    </location>
    <ligand>
        <name>Ca(2+)</name>
        <dbReference type="ChEBI" id="CHEBI:29108"/>
        <label>1</label>
    </ligand>
</feature>
<feature type="binding site" evidence="2">
    <location>
        <position position="27"/>
    </location>
    <ligand>
        <name>Ca(2+)</name>
        <dbReference type="ChEBI" id="CHEBI:29108"/>
        <label>1</label>
    </ligand>
</feature>
<feature type="binding site" evidence="2">
    <location>
        <position position="32"/>
    </location>
    <ligand>
        <name>Ca(2+)</name>
        <dbReference type="ChEBI" id="CHEBI:29108"/>
        <label>1</label>
    </ligand>
</feature>
<feature type="binding site" evidence="2">
    <location>
        <position position="57"/>
    </location>
    <ligand>
        <name>Ca(2+)</name>
        <dbReference type="ChEBI" id="CHEBI:29108"/>
        <label>2</label>
    </ligand>
</feature>
<feature type="binding site" evidence="2">
    <location>
        <position position="59"/>
    </location>
    <ligand>
        <name>Ca(2+)</name>
        <dbReference type="ChEBI" id="CHEBI:29108"/>
        <label>2</label>
    </ligand>
</feature>
<feature type="binding site" evidence="2">
    <location>
        <position position="61"/>
    </location>
    <ligand>
        <name>Ca(2+)</name>
        <dbReference type="ChEBI" id="CHEBI:29108"/>
        <label>2</label>
    </ligand>
</feature>
<feature type="binding site" evidence="2">
    <location>
        <position position="63"/>
    </location>
    <ligand>
        <name>Ca(2+)</name>
        <dbReference type="ChEBI" id="CHEBI:29108"/>
        <label>2</label>
    </ligand>
</feature>
<feature type="binding site" evidence="2">
    <location>
        <position position="68"/>
    </location>
    <ligand>
        <name>Ca(2+)</name>
        <dbReference type="ChEBI" id="CHEBI:29108"/>
        <label>2</label>
    </ligand>
</feature>
<feature type="binding site" evidence="2">
    <location>
        <position position="94"/>
    </location>
    <ligand>
        <name>Ca(2+)</name>
        <dbReference type="ChEBI" id="CHEBI:29108"/>
        <label>3</label>
    </ligand>
</feature>
<feature type="binding site" evidence="2">
    <location>
        <position position="96"/>
    </location>
    <ligand>
        <name>Ca(2+)</name>
        <dbReference type="ChEBI" id="CHEBI:29108"/>
        <label>3</label>
    </ligand>
</feature>
<feature type="binding site" evidence="2">
    <location>
        <position position="98"/>
    </location>
    <ligand>
        <name>Ca(2+)</name>
        <dbReference type="ChEBI" id="CHEBI:29108"/>
        <label>3</label>
    </ligand>
</feature>
<feature type="binding site" evidence="2">
    <location>
        <position position="105"/>
    </location>
    <ligand>
        <name>Ca(2+)</name>
        <dbReference type="ChEBI" id="CHEBI:29108"/>
        <label>3</label>
    </ligand>
</feature>
<feature type="binding site" evidence="2">
    <location>
        <position position="130"/>
    </location>
    <ligand>
        <name>Ca(2+)</name>
        <dbReference type="ChEBI" id="CHEBI:29108"/>
        <label>4</label>
    </ligand>
</feature>
<feature type="binding site" evidence="2">
    <location>
        <position position="132"/>
    </location>
    <ligand>
        <name>Ca(2+)</name>
        <dbReference type="ChEBI" id="CHEBI:29108"/>
        <label>4</label>
    </ligand>
</feature>
<feature type="binding site" evidence="2">
    <location>
        <position position="134"/>
    </location>
    <ligand>
        <name>Ca(2+)</name>
        <dbReference type="ChEBI" id="CHEBI:29108"/>
        <label>4</label>
    </ligand>
</feature>
<feature type="binding site" evidence="2">
    <location>
        <position position="136"/>
    </location>
    <ligand>
        <name>Ca(2+)</name>
        <dbReference type="ChEBI" id="CHEBI:29108"/>
        <label>4</label>
    </ligand>
</feature>
<feature type="binding site" evidence="2">
    <location>
        <position position="141"/>
    </location>
    <ligand>
        <name>Ca(2+)</name>
        <dbReference type="ChEBI" id="CHEBI:29108"/>
        <label>4</label>
    </ligand>
</feature>
<feature type="modified residue" description="N-acetylalanine" evidence="1">
    <location>
        <position position="2"/>
    </location>
</feature>
<feature type="modified residue" description="N6,N6,N6-trimethyllysine" evidence="1">
    <location>
        <position position="116"/>
    </location>
</feature>
<accession>Q40302</accession>
<dbReference type="EMBL" id="X85091">
    <property type="protein sequence ID" value="CAA59418.1"/>
    <property type="molecule type" value="mRNA"/>
</dbReference>
<dbReference type="PIR" id="S53019">
    <property type="entry name" value="S53019"/>
</dbReference>
<dbReference type="SMR" id="Q40302"/>
<dbReference type="GO" id="GO:0016460">
    <property type="term" value="C:myosin II complex"/>
    <property type="evidence" value="ECO:0007669"/>
    <property type="project" value="TreeGrafter"/>
</dbReference>
<dbReference type="GO" id="GO:0005509">
    <property type="term" value="F:calcium ion binding"/>
    <property type="evidence" value="ECO:0007669"/>
    <property type="project" value="InterPro"/>
</dbReference>
<dbReference type="CDD" id="cd00051">
    <property type="entry name" value="EFh"/>
    <property type="match status" value="2"/>
</dbReference>
<dbReference type="FunFam" id="1.10.238.10:FF:000034">
    <property type="entry name" value="Calmodulin"/>
    <property type="match status" value="1"/>
</dbReference>
<dbReference type="FunFam" id="1.10.238.10:FF:000006">
    <property type="entry name" value="Calmodulin 1"/>
    <property type="match status" value="1"/>
</dbReference>
<dbReference type="Gene3D" id="1.10.238.10">
    <property type="entry name" value="EF-hand"/>
    <property type="match status" value="3"/>
</dbReference>
<dbReference type="InterPro" id="IPR050230">
    <property type="entry name" value="CALM/Myosin/TropC-like"/>
</dbReference>
<dbReference type="InterPro" id="IPR011992">
    <property type="entry name" value="EF-hand-dom_pair"/>
</dbReference>
<dbReference type="InterPro" id="IPR018247">
    <property type="entry name" value="EF_Hand_1_Ca_BS"/>
</dbReference>
<dbReference type="InterPro" id="IPR002048">
    <property type="entry name" value="EF_hand_dom"/>
</dbReference>
<dbReference type="PANTHER" id="PTHR23048:SF0">
    <property type="entry name" value="CALMODULIN LIKE 3"/>
    <property type="match status" value="1"/>
</dbReference>
<dbReference type="PANTHER" id="PTHR23048">
    <property type="entry name" value="MYOSIN LIGHT CHAIN 1, 3"/>
    <property type="match status" value="1"/>
</dbReference>
<dbReference type="Pfam" id="PF13499">
    <property type="entry name" value="EF-hand_7"/>
    <property type="match status" value="2"/>
</dbReference>
<dbReference type="PRINTS" id="PR00450">
    <property type="entry name" value="RECOVERIN"/>
</dbReference>
<dbReference type="SMART" id="SM00054">
    <property type="entry name" value="EFh"/>
    <property type="match status" value="4"/>
</dbReference>
<dbReference type="SMART" id="SM01184">
    <property type="entry name" value="efhand_Ca_insen"/>
    <property type="match status" value="1"/>
</dbReference>
<dbReference type="SUPFAM" id="SSF47473">
    <property type="entry name" value="EF-hand"/>
    <property type="match status" value="1"/>
</dbReference>
<dbReference type="PROSITE" id="PS00018">
    <property type="entry name" value="EF_HAND_1"/>
    <property type="match status" value="4"/>
</dbReference>
<dbReference type="PROSITE" id="PS50222">
    <property type="entry name" value="EF_HAND_2"/>
    <property type="match status" value="4"/>
</dbReference>
<protein>
    <recommendedName>
        <fullName>Calmodulin</fullName>
        <shortName>CaM</shortName>
    </recommendedName>
</protein>
<keyword id="KW-0007">Acetylation</keyword>
<keyword id="KW-0106">Calcium</keyword>
<keyword id="KW-0479">Metal-binding</keyword>
<keyword id="KW-0488">Methylation</keyword>
<keyword id="KW-0677">Repeat</keyword>
<evidence type="ECO:0000250" key="1"/>
<evidence type="ECO:0000255" key="2">
    <source>
        <dbReference type="PROSITE-ProRule" id="PRU00448"/>
    </source>
</evidence>
<evidence type="ECO:0000305" key="3"/>
<name>CALM_MACPY</name>
<comment type="function">
    <text>Calmodulin mediates the control of a large number of enzymes, ion channels and other proteins by Ca(2+). Among the enzymes to be stimulated by the calmodulin-Ca(2+) complex are a number of protein kinases and phosphatases.</text>
</comment>
<comment type="miscellaneous">
    <text>This protein has four functional calcium-binding sites.</text>
</comment>
<comment type="similarity">
    <text evidence="3">Belongs to the calmodulin family.</text>
</comment>
<reference key="1">
    <citation type="online journal article" date="1995" name="Plant Gene Register">
        <title>The nucleotide sequence of Macrocystis pyrifera calmodulin cDNA.</title>
        <authorList>
            <person name="Love J."/>
            <person name="Oliver I.R."/>
            <person name="Trewavas A.J."/>
        </authorList>
        <locator>PGR95-029</locator>
    </citation>
    <scope>NUCLEOTIDE SEQUENCE [MRNA]</scope>
</reference>
<organism>
    <name type="scientific">Macrocystis pyrifera</name>
    <name type="common">Giant kelp</name>
    <name type="synonym">Fucus pyrifer</name>
    <dbReference type="NCBI Taxonomy" id="35122"/>
    <lineage>
        <taxon>Eukaryota</taxon>
        <taxon>Sar</taxon>
        <taxon>Stramenopiles</taxon>
        <taxon>Ochrophyta</taxon>
        <taxon>PX clade</taxon>
        <taxon>Phaeophyceae</taxon>
        <taxon>Laminariales</taxon>
        <taxon>Laminariaceae</taxon>
        <taxon>Macrocystis</taxon>
    </lineage>
</organism>
<proteinExistence type="evidence at transcript level"/>
<sequence>MADQLTEEQIAEFKEAFSLFDKDGDGTITTKELGTVMRSLGQNPTEAELQDMINEVDADGNGTIDFPEFLTMMARKMKDTDSEEEIIEAFKVFDKDGNGFISAAELRHIMTNLGEKLTDEEVDEMIREADIDGDGQINYEEFVKMMMAK</sequence>